<proteinExistence type="evidence at protein level"/>
<feature type="chain" id="PRO_0000288037" description="NBPF family member NBPF1">
    <location>
        <begin position="1"/>
        <end position="1214"/>
    </location>
</feature>
<feature type="domain" description="Olduvai 1" evidence="2">
    <location>
        <begin position="165"/>
        <end position="259"/>
    </location>
</feature>
<feature type="domain" description="Olduvai 2" evidence="2">
    <location>
        <begin position="436"/>
        <end position="530"/>
    </location>
</feature>
<feature type="domain" description="Olduvai 3" evidence="2">
    <location>
        <begin position="707"/>
        <end position="799"/>
    </location>
</feature>
<feature type="domain" description="Olduvai 4" evidence="2">
    <location>
        <begin position="800"/>
        <end position="888"/>
    </location>
</feature>
<feature type="domain" description="Olduvai 5" evidence="2">
    <location>
        <begin position="891"/>
        <end position="946"/>
    </location>
</feature>
<feature type="domain" description="Olduvai 6" evidence="2">
    <location>
        <begin position="947"/>
        <end position="1038"/>
    </location>
</feature>
<feature type="domain" description="Olduvai 7" evidence="2">
    <location>
        <begin position="1041"/>
        <end position="1114"/>
    </location>
</feature>
<feature type="domain" description="Olduvai 8" evidence="2">
    <location>
        <begin position="1116"/>
        <end position="1214"/>
    </location>
</feature>
<feature type="region of interest" description="Disordered" evidence="3">
    <location>
        <begin position="162"/>
        <end position="200"/>
    </location>
</feature>
<feature type="region of interest" description="Disordered" evidence="3">
    <location>
        <begin position="433"/>
        <end position="471"/>
    </location>
</feature>
<feature type="region of interest" description="Disordered" evidence="3">
    <location>
        <begin position="722"/>
        <end position="746"/>
    </location>
</feature>
<feature type="region of interest" description="Disordered" evidence="3">
    <location>
        <begin position="791"/>
        <end position="837"/>
    </location>
</feature>
<feature type="region of interest" description="Disordered" evidence="3">
    <location>
        <begin position="1102"/>
        <end position="1136"/>
    </location>
</feature>
<feature type="coiled-coil region" evidence="1">
    <location>
        <begin position="70"/>
        <end position="128"/>
    </location>
</feature>
<feature type="coiled-coil region" evidence="1">
    <location>
        <begin position="292"/>
        <end position="399"/>
    </location>
</feature>
<feature type="coiled-coil region" evidence="1">
    <location>
        <begin position="610"/>
        <end position="670"/>
    </location>
</feature>
<feature type="compositionally biased region" description="Acidic residues" evidence="3">
    <location>
        <begin position="165"/>
        <end position="177"/>
    </location>
</feature>
<feature type="compositionally biased region" description="Basic and acidic residues" evidence="3">
    <location>
        <begin position="190"/>
        <end position="200"/>
    </location>
</feature>
<feature type="compositionally biased region" description="Acidic residues" evidence="3">
    <location>
        <begin position="436"/>
        <end position="448"/>
    </location>
</feature>
<feature type="compositionally biased region" description="Basic and acidic residues" evidence="3">
    <location>
        <begin position="461"/>
        <end position="471"/>
    </location>
</feature>
<feature type="compositionally biased region" description="Acidic residues" evidence="3">
    <location>
        <begin position="801"/>
        <end position="810"/>
    </location>
</feature>
<feature type="compositionally biased region" description="Acidic residues" evidence="3">
    <location>
        <begin position="821"/>
        <end position="833"/>
    </location>
</feature>
<feature type="compositionally biased region" description="Basic residues" evidence="3">
    <location>
        <begin position="1102"/>
        <end position="1121"/>
    </location>
</feature>
<feature type="splice variant" id="VSP_059360" description="In isoform 2." evidence="6">
    <location>
        <begin position="962"/>
        <end position="1036"/>
    </location>
</feature>
<feature type="sequence variant" id="VAR_032364" description="In dbSNP:rs9730080.">
    <original>I</original>
    <variation>M</variation>
    <location>
        <position position="20"/>
    </location>
</feature>
<feature type="sequence variant" id="VAR_032365" description="In dbSNP:rs9730077.">
    <original>N</original>
    <variation>K</variation>
    <location>
        <position position="31"/>
    </location>
</feature>
<feature type="sequence variant" id="VAR_032366" description="In dbSNP:rs681623." evidence="4">
    <original>A</original>
    <variation>T</variation>
    <location>
        <position position="510"/>
    </location>
</feature>
<feature type="sequence variant" id="VAR_032367" description="In dbSNP:rs3738661.">
    <original>C</original>
    <variation>G</variation>
    <location>
        <position position="591"/>
    </location>
</feature>
<feature type="sequence variant" id="VAR_032368" description="In dbSNP:rs672812." evidence="5">
    <original>M</original>
    <variation>V</variation>
    <location>
        <position position="612"/>
    </location>
</feature>
<feature type="sequence variant" id="VAR_032369" description="In dbSNP:rs28453011." evidence="5">
    <original>C</original>
    <variation>R</variation>
    <location>
        <position position="663"/>
    </location>
</feature>
<feature type="sequence variant" id="VAR_032370" description="In dbSNP:rs3901680." evidence="5">
    <original>D</original>
    <variation>H</variation>
    <location>
        <position position="712"/>
    </location>
</feature>
<feature type="sequence variant" id="VAR_032371" description="In dbSNP:rs3901679.">
    <original>K</original>
    <variation>E</variation>
    <location>
        <position position="726"/>
    </location>
</feature>
<feature type="sequence variant" id="VAR_032372" description="In dbSNP:rs9727080." evidence="5">
    <original>P</original>
    <variation>Q</variation>
    <location>
        <position position="734"/>
    </location>
</feature>
<feature type="sequence variant" id="VAR_032373" evidence="4 5">
    <original>K</original>
    <variation>Q</variation>
    <location>
        <position position="850"/>
    </location>
</feature>
<feature type="sequence conflict" description="In Ref. 1; AAX85114." evidence="6" ref="1">
    <original>K</original>
    <variation>E</variation>
    <location>
        <position position="135"/>
    </location>
</feature>
<feature type="sequence conflict" description="In Ref. 1; AAX85114." evidence="6" ref="1">
    <original>QLF</original>
    <variation>HLV</variation>
    <location>
        <begin position="157"/>
        <end position="159"/>
    </location>
</feature>
<feature type="sequence conflict" description="In Ref. 1; AAX85114." evidence="6" ref="1">
    <original>S</original>
    <variation>G</variation>
    <location>
        <position position="216"/>
    </location>
</feature>
<feature type="sequence conflict" description="In Ref. 1; AAX85114." evidence="6" ref="1">
    <original>I</original>
    <variation>M</variation>
    <location>
        <position position="291"/>
    </location>
</feature>
<feature type="sequence conflict" description="In Ref. 1; AAX85114." evidence="6" ref="1">
    <original>H</original>
    <variation>R</variation>
    <location>
        <position position="296"/>
    </location>
</feature>
<feature type="sequence conflict" description="In Ref. 1; AAX85114." evidence="6" ref="1">
    <original>C</original>
    <variation>G</variation>
    <location>
        <position position="320"/>
    </location>
</feature>
<feature type="sequence conflict" description="In Ref. 1; AAX85114." evidence="6" ref="1">
    <original>K</original>
    <variation>E</variation>
    <location>
        <position position="335"/>
    </location>
</feature>
<feature type="sequence conflict" description="In Ref. 1; AAX85114." evidence="6" ref="1">
    <original>K</original>
    <variation>E</variation>
    <location>
        <position position="406"/>
    </location>
</feature>
<feature type="sequence conflict" description="In Ref. 1; AAX85114." evidence="6" ref="1">
    <original>QLF</original>
    <variation>HLV</variation>
    <location>
        <begin position="428"/>
        <end position="430"/>
    </location>
</feature>
<feature type="sequence conflict" description="In Ref. 3; BAB21784." evidence="6" ref="3">
    <original>G</original>
    <variation>S</variation>
    <location>
        <position position="487"/>
    </location>
</feature>
<feature type="sequence conflict" description="In Ref. 1; AAX85114." evidence="6" ref="1">
    <original>I</original>
    <variation>M</variation>
    <location>
        <position position="562"/>
    </location>
</feature>
<feature type="sequence conflict" description="In Ref. 1; AAX85114." evidence="6" ref="1">
    <original>H</original>
    <variation>R</variation>
    <location>
        <position position="567"/>
    </location>
</feature>
<feature type="sequence conflict" description="In Ref. 1; AAX85114." evidence="6" ref="1">
    <original>N</original>
    <variation>Y</variation>
    <location>
        <position position="602"/>
    </location>
</feature>
<feature type="sequence conflict" description="In Ref. 1; AAX85114." evidence="6" ref="1">
    <original>HLV</original>
    <variation>QLF</variation>
    <location>
        <begin position="699"/>
        <end position="701"/>
    </location>
</feature>
<feature type="sequence conflict" description="In Ref. 3; BAB21784 and 4; AAH34418." evidence="6" ref="3 4">
    <original>M</original>
    <variation>V</variation>
    <location>
        <position position="1138"/>
    </location>
</feature>
<feature type="sequence conflict" description="In Ref. 3; BAB21784 and 4; AAH34418." evidence="6" ref="3 4">
    <original>Y</original>
    <variation>F</variation>
    <location>
        <position position="1162"/>
    </location>
</feature>
<feature type="sequence conflict" description="In Ref. 3; BAB21784 and 4; AAH34418." evidence="6" ref="3 4">
    <original>T</original>
    <variation>R</variation>
    <location>
        <position position="1200"/>
    </location>
</feature>
<dbReference type="EMBL" id="AY894575">
    <property type="protein sequence ID" value="AAX85114.1"/>
    <property type="molecule type" value="mRNA"/>
</dbReference>
<dbReference type="EMBL" id="AL137798">
    <property type="status" value="NOT_ANNOTATED_CDS"/>
    <property type="molecule type" value="Genomic_DNA"/>
</dbReference>
<dbReference type="EMBL" id="AL355149">
    <property type="status" value="NOT_ANNOTATED_CDS"/>
    <property type="molecule type" value="Genomic_DNA"/>
</dbReference>
<dbReference type="EMBL" id="AB051480">
    <property type="protein sequence ID" value="BAB21784.1"/>
    <property type="molecule type" value="mRNA"/>
</dbReference>
<dbReference type="EMBL" id="BC034418">
    <property type="protein sequence ID" value="AAH34418.1"/>
    <property type="molecule type" value="mRNA"/>
</dbReference>
<dbReference type="RefSeq" id="NP_060410.2">
    <property type="nucleotide sequence ID" value="NM_017940.4"/>
</dbReference>
<dbReference type="SMR" id="Q3BBV0"/>
<dbReference type="BioGRID" id="120804">
    <property type="interactions" value="9"/>
</dbReference>
<dbReference type="FunCoup" id="Q3BBV0">
    <property type="interactions" value="1"/>
</dbReference>
<dbReference type="IntAct" id="Q3BBV0">
    <property type="interactions" value="7"/>
</dbReference>
<dbReference type="MINT" id="Q3BBV0"/>
<dbReference type="STRING" id="9606.ENSP00000474456"/>
<dbReference type="GlyGen" id="Q3BBV0">
    <property type="glycosylation" value="2 sites"/>
</dbReference>
<dbReference type="iPTMnet" id="Q3BBV0"/>
<dbReference type="PhosphoSitePlus" id="Q3BBV0"/>
<dbReference type="BioMuta" id="NBPF1"/>
<dbReference type="DMDM" id="121942439"/>
<dbReference type="jPOST" id="Q3BBV0"/>
<dbReference type="MassIVE" id="Q3BBV0"/>
<dbReference type="PaxDb" id="9606-ENSP00000474456"/>
<dbReference type="PeptideAtlas" id="Q3BBV0"/>
<dbReference type="ProteomicsDB" id="61674"/>
<dbReference type="Antibodypedia" id="68746">
    <property type="antibodies" value="7 antibodies from 5 providers"/>
</dbReference>
<dbReference type="DNASU" id="55672"/>
<dbReference type="Ensembl" id="ENST00000430580.6">
    <molecule id="Q3BBV0-2"/>
    <property type="protein sequence ID" value="ENSP00000474456.1"/>
    <property type="gene ID" value="ENSG00000219481.11"/>
</dbReference>
<dbReference type="GeneID" id="55672"/>
<dbReference type="KEGG" id="hsa:55672"/>
<dbReference type="AGR" id="HGNC:26088"/>
<dbReference type="CTD" id="55672"/>
<dbReference type="DisGeNET" id="55672"/>
<dbReference type="GeneCards" id="NBPF1"/>
<dbReference type="HGNC" id="HGNC:26088">
    <property type="gene designation" value="NBPF1"/>
</dbReference>
<dbReference type="HPA" id="ENSG00000219481">
    <property type="expression patterns" value="Low tissue specificity"/>
</dbReference>
<dbReference type="MIM" id="610501">
    <property type="type" value="gene"/>
</dbReference>
<dbReference type="neXtProt" id="NX_Q3BBV0"/>
<dbReference type="OpenTargets" id="ENSG00000219481"/>
<dbReference type="PharmGKB" id="PA128395786"/>
<dbReference type="VEuPathDB" id="HostDB:ENSG00000219481"/>
<dbReference type="eggNOG" id="ENOG502RU1I">
    <property type="taxonomic scope" value="Eukaryota"/>
</dbReference>
<dbReference type="GeneTree" id="ENSGT00420000029746"/>
<dbReference type="InParanoid" id="Q3BBV0"/>
<dbReference type="OrthoDB" id="9665129at2759"/>
<dbReference type="PAN-GO" id="Q3BBV0">
    <property type="GO annotations" value="0 GO annotations based on evolutionary models"/>
</dbReference>
<dbReference type="PhylomeDB" id="Q3BBV0"/>
<dbReference type="PathwayCommons" id="Q3BBV0"/>
<dbReference type="SignaLink" id="Q3BBV0"/>
<dbReference type="BioGRID-ORCS" id="55672">
    <property type="hits" value="36 hits in 196 CRISPR screens"/>
</dbReference>
<dbReference type="ChiTaRS" id="NBPF1">
    <property type="organism name" value="human"/>
</dbReference>
<dbReference type="GenomeRNAi" id="55672"/>
<dbReference type="Pharos" id="Q3BBV0">
    <property type="development level" value="Tdark"/>
</dbReference>
<dbReference type="PRO" id="PR:Q3BBV0"/>
<dbReference type="Proteomes" id="UP000005640">
    <property type="component" value="Chromosome 1"/>
</dbReference>
<dbReference type="RNAct" id="Q3BBV0">
    <property type="molecule type" value="protein"/>
</dbReference>
<dbReference type="Bgee" id="ENSG00000219481">
    <property type="expression patterns" value="Expressed in adrenal tissue and 143 other cell types or tissues"/>
</dbReference>
<dbReference type="ExpressionAtlas" id="Q3BBV0">
    <property type="expression patterns" value="baseline and differential"/>
</dbReference>
<dbReference type="GO" id="GO:0005737">
    <property type="term" value="C:cytoplasm"/>
    <property type="evidence" value="ECO:0007669"/>
    <property type="project" value="UniProtKB-SubCell"/>
</dbReference>
<dbReference type="InterPro" id="IPR055306">
    <property type="entry name" value="NBPF"/>
</dbReference>
<dbReference type="InterPro" id="IPR010630">
    <property type="entry name" value="Olduvai_dom"/>
</dbReference>
<dbReference type="PANTHER" id="PTHR14199:SF35">
    <property type="entry name" value="NEUROBLASTOMA BREAKPOINT FAMILY MEMBER 1-RELATED"/>
    <property type="match status" value="1"/>
</dbReference>
<dbReference type="PANTHER" id="PTHR14199">
    <property type="entry name" value="NEUROBLASTOMA BREAKPOINT FAMILY MEMBER 6-LIKE PROTEIN"/>
    <property type="match status" value="1"/>
</dbReference>
<dbReference type="Pfam" id="PF06758">
    <property type="entry name" value="Olduvai"/>
    <property type="match status" value="8"/>
</dbReference>
<dbReference type="SMART" id="SM01148">
    <property type="entry name" value="DUF1220"/>
    <property type="match status" value="8"/>
</dbReference>
<dbReference type="PROSITE" id="PS51316">
    <property type="entry name" value="ODV"/>
    <property type="match status" value="8"/>
</dbReference>
<name>NBPF1_HUMAN</name>
<keyword id="KW-0025">Alternative splicing</keyword>
<keyword id="KW-0175">Coiled coil</keyword>
<keyword id="KW-0963">Cytoplasm</keyword>
<keyword id="KW-1267">Proteomics identification</keyword>
<keyword id="KW-1185">Reference proteome</keyword>
<keyword id="KW-0677">Repeat</keyword>
<comment type="interaction">
    <interactant intactId="EBI-2804530">
        <id>Q3BBV0</id>
    </interactant>
    <interactant intactId="EBI-710124">
        <id>O60341</id>
        <label>KDM1A</label>
    </interactant>
    <organismsDiffer>false</organismsDiffer>
    <experiments>5</experiments>
</comment>
<comment type="subcellular location">
    <subcellularLocation>
        <location evidence="5">Cytoplasm</location>
    </subcellularLocation>
</comment>
<comment type="alternative products">
    <event type="alternative splicing"/>
    <isoform>
        <id>Q3BBV0-1</id>
        <name>1</name>
        <sequence type="displayed"/>
    </isoform>
    <isoform>
        <id>Q3BBV0-2</id>
        <name>2</name>
        <sequence type="described" ref="VSP_059360"/>
    </isoform>
</comment>
<comment type="tissue specificity">
    <text evidence="5">Widely expressed. The only tissue which shows a weak expression is kidney.</text>
</comment>
<comment type="miscellaneous">
    <text>Encoded by one of the numerous copies of NBPF genes clustered in the p36, p12 and q21 region of the chromosome 1.</text>
</comment>
<comment type="similarity">
    <text evidence="6">Belongs to the NBPF family.</text>
</comment>
<organism>
    <name type="scientific">Homo sapiens</name>
    <name type="common">Human</name>
    <dbReference type="NCBI Taxonomy" id="9606"/>
    <lineage>
        <taxon>Eukaryota</taxon>
        <taxon>Metazoa</taxon>
        <taxon>Chordata</taxon>
        <taxon>Craniata</taxon>
        <taxon>Vertebrata</taxon>
        <taxon>Euteleostomi</taxon>
        <taxon>Mammalia</taxon>
        <taxon>Eutheria</taxon>
        <taxon>Euarchontoglires</taxon>
        <taxon>Primates</taxon>
        <taxon>Haplorrhini</taxon>
        <taxon>Catarrhini</taxon>
        <taxon>Hominidae</taxon>
        <taxon>Homo</taxon>
    </lineage>
</organism>
<accession>Q3BBV0</accession>
<accession>Q8N4E8</accession>
<accession>Q9C0H0</accession>
<accession>S4R3K2</accession>
<gene>
    <name evidence="7" type="primary">NBPF1</name>
    <name type="synonym">KIAA1693</name>
</gene>
<sequence length="1214" mass="139258">MVVSAGPWSSEKAETNILEINEKLRPQLAENKQQFRNLKEKCFVTQLAGFLANRQKKYKYEECKDLIKFMLRNERQFKEEKLAEQLKQAEELRQYKVLVHSQERELTQLREKLREGRDASRSLNQHLQALLTPDKPDKSQGQDLQEQLAEGCRLAQQLFQKLSPENDEDEDEDVQVEEAEKVLESSAPREVQKAEESKVPEDSLEECAITCSNSHSPCDSNQPHKNINITFEEDKVNSTLVVDRESSHDECQDAVNILPVPGPTSSATNVSMVVSAGPLSSEKAEMNILEINEKLHPQLAEKKQQFRNLKEKCFVTQLACFLANQQNKYKYEECKDLIKSMLRNERQFKEEKLAEQLKQAEELRQYKVLVHSQERELTQLREKLREGRDASRSLNQHLQALLTPDKPDKSQGQDLQEQLAEGCRLAQQLFQKLSPENDEDEDEDVQVEEAEKVLESSAPREVQKAEESKVPEDSLEECAITCSNSHGPCDSNQPHKNINITFEEDKVNSALVVDRESSHDECQDAVNILPVPGPTSSATNVSMVVSAGPLSSEKAEMNILEINEKLHPQLAEKKQQFRNLKEKCFVTQLACFLANQQNKYKNEECKDLIKSMLRNERQFKEEKLAEQLKQAEELRQYKVLVHSQERELTQLREKLREGRDASCSLNQHLQALLTPDEPDKSQGQDLQEQLAEGCRLAQHLVQKLSPENDNDDDEDVQVEVAEKVQKSSAPREMPKAEEKEVPEDSLEECAITCSNSHGPYDSNQPHRKTKITFEEDKVDSTLIGSSSHVEWEDAVHIIPENESDDEEEEEKGPVSPRNLQESEEEEVPQESWDEGYSTLSIPPEMLASYKSYSGTFHSLEEQQVCMAVDIGGHRWDQVKKEDQEATGPRLSRELLDEKGPEVLQDSLDRCYSTPSGYLELTDSCQPYRSAFYILEQQRVGWALDMDEIEKYQEVEEDQDPSCPRLSRELLDEKEPEVLQDSLDRCYSTPSGYLELPDLGQPYRSAVYSLEEQYLGLALDVDRIKKDQEEEEDQGPPCPRLSRELLEAVEPEVLQDSLDRCYSTPSSCLEQPDSCLPYGSSFYALEEKHVGFSLDVGEIEKKGKGKKRRGRRSTKKRRRRGRKEGEEDQNPPCPRLSGMLMEVEEPEVLQDSLDRCYSTPSMYFELPDSFQHYRSVFYSFEEQHISFALDVDNRFLTLMGTSLHLVFQMGVIFPQ</sequence>
<evidence type="ECO:0000255" key="1"/>
<evidence type="ECO:0000255" key="2">
    <source>
        <dbReference type="PROSITE-ProRule" id="PRU00647"/>
    </source>
</evidence>
<evidence type="ECO:0000256" key="3">
    <source>
        <dbReference type="SAM" id="MobiDB-lite"/>
    </source>
</evidence>
<evidence type="ECO:0000269" key="4">
    <source>
    </source>
</evidence>
<evidence type="ECO:0000269" key="5">
    <source>
    </source>
</evidence>
<evidence type="ECO:0000305" key="6"/>
<evidence type="ECO:0000312" key="7">
    <source>
        <dbReference type="HGNC" id="HGNC:26088"/>
    </source>
</evidence>
<protein>
    <recommendedName>
        <fullName evidence="6">NBPF family member NBPF1</fullName>
    </recommendedName>
    <alternativeName>
        <fullName>Neuroblastoma breakpoint family member 1</fullName>
    </alternativeName>
</protein>
<reference key="1">
    <citation type="journal article" date="2005" name="Mol. Biol. Evol.">
        <title>A novel gene family NBPF: intricate structure generated by gene duplications during primate evolution.</title>
        <authorList>
            <person name="Vandepoele K."/>
            <person name="Van Roy N."/>
            <person name="Staes K."/>
            <person name="Speleman F."/>
            <person name="van Roy F."/>
        </authorList>
    </citation>
    <scope>NUCLEOTIDE SEQUENCE [MRNA] (ISOFORM 1)</scope>
    <scope>SUBCELLULAR LOCATION</scope>
    <scope>TISSUE SPECIFICITY</scope>
    <scope>VARIANTS VAL-612; ARG-663; HIS-712; GLN-734 AND GLN-850</scope>
    <source>
        <tissue>Mammary gland</tissue>
    </source>
</reference>
<reference key="2">
    <citation type="journal article" date="2006" name="Nature">
        <title>The DNA sequence and biological annotation of human chromosome 1.</title>
        <authorList>
            <person name="Gregory S.G."/>
            <person name="Barlow K.F."/>
            <person name="McLay K.E."/>
            <person name="Kaul R."/>
            <person name="Swarbreck D."/>
            <person name="Dunham A."/>
            <person name="Scott C.E."/>
            <person name="Howe K.L."/>
            <person name="Woodfine K."/>
            <person name="Spencer C.C.A."/>
            <person name="Jones M.C."/>
            <person name="Gillson C."/>
            <person name="Searle S."/>
            <person name="Zhou Y."/>
            <person name="Kokocinski F."/>
            <person name="McDonald L."/>
            <person name="Evans R."/>
            <person name="Phillips K."/>
            <person name="Atkinson A."/>
            <person name="Cooper R."/>
            <person name="Jones C."/>
            <person name="Hall R.E."/>
            <person name="Andrews T.D."/>
            <person name="Lloyd C."/>
            <person name="Ainscough R."/>
            <person name="Almeida J.P."/>
            <person name="Ambrose K.D."/>
            <person name="Anderson F."/>
            <person name="Andrew R.W."/>
            <person name="Ashwell R.I.S."/>
            <person name="Aubin K."/>
            <person name="Babbage A.K."/>
            <person name="Bagguley C.L."/>
            <person name="Bailey J."/>
            <person name="Beasley H."/>
            <person name="Bethel G."/>
            <person name="Bird C.P."/>
            <person name="Bray-Allen S."/>
            <person name="Brown J.Y."/>
            <person name="Brown A.J."/>
            <person name="Buckley D."/>
            <person name="Burton J."/>
            <person name="Bye J."/>
            <person name="Carder C."/>
            <person name="Chapman J.C."/>
            <person name="Clark S.Y."/>
            <person name="Clarke G."/>
            <person name="Clee C."/>
            <person name="Cobley V."/>
            <person name="Collier R.E."/>
            <person name="Corby N."/>
            <person name="Coville G.J."/>
            <person name="Davies J."/>
            <person name="Deadman R."/>
            <person name="Dunn M."/>
            <person name="Earthrowl M."/>
            <person name="Ellington A.G."/>
            <person name="Errington H."/>
            <person name="Frankish A."/>
            <person name="Frankland J."/>
            <person name="French L."/>
            <person name="Garner P."/>
            <person name="Garnett J."/>
            <person name="Gay L."/>
            <person name="Ghori M.R.J."/>
            <person name="Gibson R."/>
            <person name="Gilby L.M."/>
            <person name="Gillett W."/>
            <person name="Glithero R.J."/>
            <person name="Grafham D.V."/>
            <person name="Griffiths C."/>
            <person name="Griffiths-Jones S."/>
            <person name="Grocock R."/>
            <person name="Hammond S."/>
            <person name="Harrison E.S.I."/>
            <person name="Hart E."/>
            <person name="Haugen E."/>
            <person name="Heath P.D."/>
            <person name="Holmes S."/>
            <person name="Holt K."/>
            <person name="Howden P.J."/>
            <person name="Hunt A.R."/>
            <person name="Hunt S.E."/>
            <person name="Hunter G."/>
            <person name="Isherwood J."/>
            <person name="James R."/>
            <person name="Johnson C."/>
            <person name="Johnson D."/>
            <person name="Joy A."/>
            <person name="Kay M."/>
            <person name="Kershaw J.K."/>
            <person name="Kibukawa M."/>
            <person name="Kimberley A.M."/>
            <person name="King A."/>
            <person name="Knights A.J."/>
            <person name="Lad H."/>
            <person name="Laird G."/>
            <person name="Lawlor S."/>
            <person name="Leongamornlert D.A."/>
            <person name="Lloyd D.M."/>
            <person name="Loveland J."/>
            <person name="Lovell J."/>
            <person name="Lush M.J."/>
            <person name="Lyne R."/>
            <person name="Martin S."/>
            <person name="Mashreghi-Mohammadi M."/>
            <person name="Matthews L."/>
            <person name="Matthews N.S.W."/>
            <person name="McLaren S."/>
            <person name="Milne S."/>
            <person name="Mistry S."/>
            <person name="Moore M.J.F."/>
            <person name="Nickerson T."/>
            <person name="O'Dell C.N."/>
            <person name="Oliver K."/>
            <person name="Palmeiri A."/>
            <person name="Palmer S.A."/>
            <person name="Parker A."/>
            <person name="Patel D."/>
            <person name="Pearce A.V."/>
            <person name="Peck A.I."/>
            <person name="Pelan S."/>
            <person name="Phelps K."/>
            <person name="Phillimore B.J."/>
            <person name="Plumb R."/>
            <person name="Rajan J."/>
            <person name="Raymond C."/>
            <person name="Rouse G."/>
            <person name="Saenphimmachak C."/>
            <person name="Sehra H.K."/>
            <person name="Sheridan E."/>
            <person name="Shownkeen R."/>
            <person name="Sims S."/>
            <person name="Skuce C.D."/>
            <person name="Smith M."/>
            <person name="Steward C."/>
            <person name="Subramanian S."/>
            <person name="Sycamore N."/>
            <person name="Tracey A."/>
            <person name="Tromans A."/>
            <person name="Van Helmond Z."/>
            <person name="Wall M."/>
            <person name="Wallis J.M."/>
            <person name="White S."/>
            <person name="Whitehead S.L."/>
            <person name="Wilkinson J.E."/>
            <person name="Willey D.L."/>
            <person name="Williams H."/>
            <person name="Wilming L."/>
            <person name="Wray P.W."/>
            <person name="Wu Z."/>
            <person name="Coulson A."/>
            <person name="Vaudin M."/>
            <person name="Sulston J.E."/>
            <person name="Durbin R.M."/>
            <person name="Hubbard T."/>
            <person name="Wooster R."/>
            <person name="Dunham I."/>
            <person name="Carter N.P."/>
            <person name="McVean G."/>
            <person name="Ross M.T."/>
            <person name="Harrow J."/>
            <person name="Olson M.V."/>
            <person name="Beck S."/>
            <person name="Rogers J."/>
            <person name="Bentley D.R."/>
        </authorList>
    </citation>
    <scope>NUCLEOTIDE SEQUENCE [GENOMIC DNA]</scope>
</reference>
<reference key="3">
    <citation type="journal article" date="2000" name="DNA Res.">
        <title>Prediction of the coding sequences of unidentified human genes. XIX. The complete sequences of 100 new cDNA clones from brain which code for large proteins in vitro.</title>
        <authorList>
            <person name="Nagase T."/>
            <person name="Kikuno R."/>
            <person name="Hattori A."/>
            <person name="Kondo Y."/>
            <person name="Okumura K."/>
            <person name="Ohara O."/>
        </authorList>
    </citation>
    <scope>NUCLEOTIDE SEQUENCE [LARGE SCALE MRNA] OF 314-1214 (ISOFORM 1)</scope>
    <scope>VARIANTS THR-510 AND GLN-850</scope>
</reference>
<reference key="4">
    <citation type="journal article" date="2004" name="Genome Res.">
        <title>The status, quality, and expansion of the NIH full-length cDNA project: the Mammalian Gene Collection (MGC).</title>
        <authorList>
            <consortium name="The MGC Project Team"/>
        </authorList>
    </citation>
    <scope>NUCLEOTIDE SEQUENCE [LARGE SCALE MRNA] OF 612-1214 (ISOFORM 1)</scope>
    <source>
        <tissue>Pancreas</tissue>
    </source>
</reference>